<reference key="1">
    <citation type="journal article" date="1989" name="Science">
        <title>Identification of a zinc finger protein that binds to the sterol regulatory element.</title>
        <authorList>
            <person name="Rajavashisth T.B."/>
            <person name="Taylor A.K."/>
            <person name="Andalibi A."/>
            <person name="Svenson K.L."/>
            <person name="Lusis A.J."/>
        </authorList>
    </citation>
    <scope>NUCLEOTIDE SEQUENCE [MRNA] (ISOFORM 1)</scope>
    <scope>FUNCTION</scope>
    <scope>TISSUE SPECIFICITY</scope>
    <scope>INDUCTION BY STEROL</scope>
</reference>
<reference key="2">
    <citation type="journal article" date="1995" name="Gene">
        <title>Organization of the gene encoding cellular nucleic acid-binding protein.</title>
        <authorList>
            <person name="Flink I.L."/>
            <person name="Morkin E."/>
        </authorList>
    </citation>
    <scope>NUCLEOTIDE SEQUENCE [GENOMIC DNA]</scope>
    <source>
        <tissue>Placenta</tissue>
    </source>
</reference>
<reference key="3">
    <citation type="journal article" date="2001" name="Science">
        <title>Myotonic dystrophy type 2 caused by a CCTG expansion in intron 1 of ZNF9.</title>
        <authorList>
            <person name="Liquori C.L."/>
            <person name="Ricker K."/>
            <person name="Moseley M.L."/>
            <person name="Jacobsen J.F."/>
            <person name="Kress W."/>
            <person name="Naylor S.L."/>
            <person name="Day J.W."/>
            <person name="Ranum L.P."/>
        </authorList>
    </citation>
    <scope>NUCLEOTIDE SEQUENCE [GENOMIC DNA]</scope>
    <scope>DISEASE</scope>
</reference>
<reference key="4">
    <citation type="submission" date="2005-06" db="EMBL/GenBank/DDBJ databases">
        <title>Cloning of novel transcript variants of human cellular nucleic acid binding protein.</title>
        <authorList>
            <person name="Yang F."/>
            <person name="Yan H."/>
            <person name="Zhang S."/>
        </authorList>
    </citation>
    <scope>NUCLEOTIDE SEQUENCE [MRNA] (ISOFORMS 4; 5 AND 8)</scope>
</reference>
<reference key="5">
    <citation type="journal article" date="2004" name="Nat. Genet.">
        <title>Complete sequencing and characterization of 21,243 full-length human cDNAs.</title>
        <authorList>
            <person name="Ota T."/>
            <person name="Suzuki Y."/>
            <person name="Nishikawa T."/>
            <person name="Otsuki T."/>
            <person name="Sugiyama T."/>
            <person name="Irie R."/>
            <person name="Wakamatsu A."/>
            <person name="Hayashi K."/>
            <person name="Sato H."/>
            <person name="Nagai K."/>
            <person name="Kimura K."/>
            <person name="Makita H."/>
            <person name="Sekine M."/>
            <person name="Obayashi M."/>
            <person name="Nishi T."/>
            <person name="Shibahara T."/>
            <person name="Tanaka T."/>
            <person name="Ishii S."/>
            <person name="Yamamoto J."/>
            <person name="Saito K."/>
            <person name="Kawai Y."/>
            <person name="Isono Y."/>
            <person name="Nakamura Y."/>
            <person name="Nagahari K."/>
            <person name="Murakami K."/>
            <person name="Yasuda T."/>
            <person name="Iwayanagi T."/>
            <person name="Wagatsuma M."/>
            <person name="Shiratori A."/>
            <person name="Sudo H."/>
            <person name="Hosoiri T."/>
            <person name="Kaku Y."/>
            <person name="Kodaira H."/>
            <person name="Kondo H."/>
            <person name="Sugawara M."/>
            <person name="Takahashi M."/>
            <person name="Kanda K."/>
            <person name="Yokoi T."/>
            <person name="Furuya T."/>
            <person name="Kikkawa E."/>
            <person name="Omura Y."/>
            <person name="Abe K."/>
            <person name="Kamihara K."/>
            <person name="Katsuta N."/>
            <person name="Sato K."/>
            <person name="Tanikawa M."/>
            <person name="Yamazaki M."/>
            <person name="Ninomiya K."/>
            <person name="Ishibashi T."/>
            <person name="Yamashita H."/>
            <person name="Murakawa K."/>
            <person name="Fujimori K."/>
            <person name="Tanai H."/>
            <person name="Kimata M."/>
            <person name="Watanabe M."/>
            <person name="Hiraoka S."/>
            <person name="Chiba Y."/>
            <person name="Ishida S."/>
            <person name="Ono Y."/>
            <person name="Takiguchi S."/>
            <person name="Watanabe S."/>
            <person name="Yosida M."/>
            <person name="Hotuta T."/>
            <person name="Kusano J."/>
            <person name="Kanehori K."/>
            <person name="Takahashi-Fujii A."/>
            <person name="Hara H."/>
            <person name="Tanase T.-O."/>
            <person name="Nomura Y."/>
            <person name="Togiya S."/>
            <person name="Komai F."/>
            <person name="Hara R."/>
            <person name="Takeuchi K."/>
            <person name="Arita M."/>
            <person name="Imose N."/>
            <person name="Musashino K."/>
            <person name="Yuuki H."/>
            <person name="Oshima A."/>
            <person name="Sasaki N."/>
            <person name="Aotsuka S."/>
            <person name="Yoshikawa Y."/>
            <person name="Matsunawa H."/>
            <person name="Ichihara T."/>
            <person name="Shiohata N."/>
            <person name="Sano S."/>
            <person name="Moriya S."/>
            <person name="Momiyama H."/>
            <person name="Satoh N."/>
            <person name="Takami S."/>
            <person name="Terashima Y."/>
            <person name="Suzuki O."/>
            <person name="Nakagawa S."/>
            <person name="Senoh A."/>
            <person name="Mizoguchi H."/>
            <person name="Goto Y."/>
            <person name="Shimizu F."/>
            <person name="Wakebe H."/>
            <person name="Hishigaki H."/>
            <person name="Watanabe T."/>
            <person name="Sugiyama A."/>
            <person name="Takemoto M."/>
            <person name="Kawakami B."/>
            <person name="Yamazaki M."/>
            <person name="Watanabe K."/>
            <person name="Kumagai A."/>
            <person name="Itakura S."/>
            <person name="Fukuzumi Y."/>
            <person name="Fujimori Y."/>
            <person name="Komiyama M."/>
            <person name="Tashiro H."/>
            <person name="Tanigami A."/>
            <person name="Fujiwara T."/>
            <person name="Ono T."/>
            <person name="Yamada K."/>
            <person name="Fujii Y."/>
            <person name="Ozaki K."/>
            <person name="Hirao M."/>
            <person name="Ohmori Y."/>
            <person name="Kawabata A."/>
            <person name="Hikiji T."/>
            <person name="Kobatake N."/>
            <person name="Inagaki H."/>
            <person name="Ikema Y."/>
            <person name="Okamoto S."/>
            <person name="Okitani R."/>
            <person name="Kawakami T."/>
            <person name="Noguchi S."/>
            <person name="Itoh T."/>
            <person name="Shigeta K."/>
            <person name="Senba T."/>
            <person name="Matsumura K."/>
            <person name="Nakajima Y."/>
            <person name="Mizuno T."/>
            <person name="Morinaga M."/>
            <person name="Sasaki M."/>
            <person name="Togashi T."/>
            <person name="Oyama M."/>
            <person name="Hata H."/>
            <person name="Watanabe M."/>
            <person name="Komatsu T."/>
            <person name="Mizushima-Sugano J."/>
            <person name="Satoh T."/>
            <person name="Shirai Y."/>
            <person name="Takahashi Y."/>
            <person name="Nakagawa K."/>
            <person name="Okumura K."/>
            <person name="Nagase T."/>
            <person name="Nomura N."/>
            <person name="Kikuchi H."/>
            <person name="Masuho Y."/>
            <person name="Yamashita R."/>
            <person name="Nakai K."/>
            <person name="Yada T."/>
            <person name="Nakamura Y."/>
            <person name="Ohara O."/>
            <person name="Isogai T."/>
            <person name="Sugano S."/>
        </authorList>
    </citation>
    <scope>NUCLEOTIDE SEQUENCE [LARGE SCALE MRNA] (ISOFORMS 1; 3; 6 AND 7)</scope>
    <source>
        <tissue>Placenta</tissue>
        <tissue>Synovium</tissue>
    </source>
</reference>
<reference key="6">
    <citation type="submission" date="2004-10" db="EMBL/GenBank/DDBJ databases">
        <title>Cloning of human full-length CDSs in BD Creator(TM) system donor vector.</title>
        <authorList>
            <person name="Kalnine N."/>
            <person name="Chen X."/>
            <person name="Rolfs A."/>
            <person name="Halleck A."/>
            <person name="Hines L."/>
            <person name="Eisenstein S."/>
            <person name="Koundinya M."/>
            <person name="Raphael J."/>
            <person name="Moreira D."/>
            <person name="Kelley T."/>
            <person name="LaBaer J."/>
            <person name="Lin Y."/>
            <person name="Phelan M."/>
            <person name="Farmer A."/>
        </authorList>
    </citation>
    <scope>NUCLEOTIDE SEQUENCE [LARGE SCALE MRNA] (ISOFORM 4)</scope>
</reference>
<reference key="7">
    <citation type="journal article" date="2006" name="Nature">
        <title>The DNA sequence, annotation and analysis of human chromosome 3.</title>
        <authorList>
            <person name="Muzny D.M."/>
            <person name="Scherer S.E."/>
            <person name="Kaul R."/>
            <person name="Wang J."/>
            <person name="Yu J."/>
            <person name="Sudbrak R."/>
            <person name="Buhay C.J."/>
            <person name="Chen R."/>
            <person name="Cree A."/>
            <person name="Ding Y."/>
            <person name="Dugan-Rocha S."/>
            <person name="Gill R."/>
            <person name="Gunaratne P."/>
            <person name="Harris R.A."/>
            <person name="Hawes A.C."/>
            <person name="Hernandez J."/>
            <person name="Hodgson A.V."/>
            <person name="Hume J."/>
            <person name="Jackson A."/>
            <person name="Khan Z.M."/>
            <person name="Kovar-Smith C."/>
            <person name="Lewis L.R."/>
            <person name="Lozado R.J."/>
            <person name="Metzker M.L."/>
            <person name="Milosavljevic A."/>
            <person name="Miner G.R."/>
            <person name="Morgan M.B."/>
            <person name="Nazareth L.V."/>
            <person name="Scott G."/>
            <person name="Sodergren E."/>
            <person name="Song X.-Z."/>
            <person name="Steffen D."/>
            <person name="Wei S."/>
            <person name="Wheeler D.A."/>
            <person name="Wright M.W."/>
            <person name="Worley K.C."/>
            <person name="Yuan Y."/>
            <person name="Zhang Z."/>
            <person name="Adams C.Q."/>
            <person name="Ansari-Lari M.A."/>
            <person name="Ayele M."/>
            <person name="Brown M.J."/>
            <person name="Chen G."/>
            <person name="Chen Z."/>
            <person name="Clendenning J."/>
            <person name="Clerc-Blankenburg K.P."/>
            <person name="Chen R."/>
            <person name="Chen Z."/>
            <person name="Davis C."/>
            <person name="Delgado O."/>
            <person name="Dinh H.H."/>
            <person name="Dong W."/>
            <person name="Draper H."/>
            <person name="Ernst S."/>
            <person name="Fu G."/>
            <person name="Gonzalez-Garay M.L."/>
            <person name="Garcia D.K."/>
            <person name="Gillett W."/>
            <person name="Gu J."/>
            <person name="Hao B."/>
            <person name="Haugen E."/>
            <person name="Havlak P."/>
            <person name="He X."/>
            <person name="Hennig S."/>
            <person name="Hu S."/>
            <person name="Huang W."/>
            <person name="Jackson L.R."/>
            <person name="Jacob L.S."/>
            <person name="Kelly S.H."/>
            <person name="Kube M."/>
            <person name="Levy R."/>
            <person name="Li Z."/>
            <person name="Liu B."/>
            <person name="Liu J."/>
            <person name="Liu W."/>
            <person name="Lu J."/>
            <person name="Maheshwari M."/>
            <person name="Nguyen B.-V."/>
            <person name="Okwuonu G.O."/>
            <person name="Palmeiri A."/>
            <person name="Pasternak S."/>
            <person name="Perez L.M."/>
            <person name="Phelps K.A."/>
            <person name="Plopper F.J."/>
            <person name="Qiang B."/>
            <person name="Raymond C."/>
            <person name="Rodriguez R."/>
            <person name="Saenphimmachak C."/>
            <person name="Santibanez J."/>
            <person name="Shen H."/>
            <person name="Shen Y."/>
            <person name="Subramanian S."/>
            <person name="Tabor P.E."/>
            <person name="Verduzco D."/>
            <person name="Waldron L."/>
            <person name="Wang J."/>
            <person name="Wang J."/>
            <person name="Wang Q."/>
            <person name="Williams G.A."/>
            <person name="Wong G.K.-S."/>
            <person name="Yao Z."/>
            <person name="Zhang J."/>
            <person name="Zhang X."/>
            <person name="Zhao G."/>
            <person name="Zhou J."/>
            <person name="Zhou Y."/>
            <person name="Nelson D."/>
            <person name="Lehrach H."/>
            <person name="Reinhardt R."/>
            <person name="Naylor S.L."/>
            <person name="Yang H."/>
            <person name="Olson M."/>
            <person name="Weinstock G."/>
            <person name="Gibbs R.A."/>
        </authorList>
    </citation>
    <scope>NUCLEOTIDE SEQUENCE [LARGE SCALE GENOMIC DNA]</scope>
</reference>
<reference key="8">
    <citation type="submission" date="2005-09" db="EMBL/GenBank/DDBJ databases">
        <authorList>
            <person name="Mural R.J."/>
            <person name="Istrail S."/>
            <person name="Sutton G.G."/>
            <person name="Florea L."/>
            <person name="Halpern A.L."/>
            <person name="Mobarry C.M."/>
            <person name="Lippert R."/>
            <person name="Walenz B."/>
            <person name="Shatkay H."/>
            <person name="Dew I."/>
            <person name="Miller J.R."/>
            <person name="Flanigan M.J."/>
            <person name="Edwards N.J."/>
            <person name="Bolanos R."/>
            <person name="Fasulo D."/>
            <person name="Halldorsson B.V."/>
            <person name="Hannenhalli S."/>
            <person name="Turner R."/>
            <person name="Yooseph S."/>
            <person name="Lu F."/>
            <person name="Nusskern D.R."/>
            <person name="Shue B.C."/>
            <person name="Zheng X.H."/>
            <person name="Zhong F."/>
            <person name="Delcher A.L."/>
            <person name="Huson D.H."/>
            <person name="Kravitz S.A."/>
            <person name="Mouchard L."/>
            <person name="Reinert K."/>
            <person name="Remington K.A."/>
            <person name="Clark A.G."/>
            <person name="Waterman M.S."/>
            <person name="Eichler E.E."/>
            <person name="Adams M.D."/>
            <person name="Hunkapiller M.W."/>
            <person name="Myers E.W."/>
            <person name="Venter J.C."/>
        </authorList>
    </citation>
    <scope>NUCLEOTIDE SEQUENCE [LARGE SCALE GENOMIC DNA]</scope>
</reference>
<reference key="9">
    <citation type="journal article" date="2004" name="Genome Res.">
        <title>The status, quality, and expansion of the NIH full-length cDNA project: the Mammalian Gene Collection (MGC).</title>
        <authorList>
            <consortium name="The MGC Project Team"/>
        </authorList>
    </citation>
    <scope>NUCLEOTIDE SEQUENCE [LARGE SCALE MRNA] (ISOFORMS 1 AND 2)</scope>
    <source>
        <tissue>Brain</tissue>
        <tissue>Lung</tissue>
        <tissue>Uterus</tissue>
    </source>
</reference>
<reference key="10">
    <citation type="journal article" date="2011" name="BMC Syst. Biol.">
        <title>Initial characterization of the human central proteome.</title>
        <authorList>
            <person name="Burkard T.R."/>
            <person name="Planyavsky M."/>
            <person name="Kaupe I."/>
            <person name="Breitwieser F.P."/>
            <person name="Buerckstuemmer T."/>
            <person name="Bennett K.L."/>
            <person name="Superti-Furga G."/>
            <person name="Colinge J."/>
        </authorList>
    </citation>
    <scope>IDENTIFICATION BY MASS SPECTROMETRY [LARGE SCALE ANALYSIS]</scope>
</reference>
<reference key="11">
    <citation type="journal article" date="2012" name="Proc. Natl. Acad. Sci. U.S.A.">
        <title>N-terminal acetylome analyses and functional insights of the N-terminal acetyltransferase NatB.</title>
        <authorList>
            <person name="Van Damme P."/>
            <person name="Lasa M."/>
            <person name="Polevoda B."/>
            <person name="Gazquez C."/>
            <person name="Elosegui-Artola A."/>
            <person name="Kim D.S."/>
            <person name="De Juan-Pardo E."/>
            <person name="Demeyer K."/>
            <person name="Hole K."/>
            <person name="Larrea E."/>
            <person name="Timmerman E."/>
            <person name="Prieto J."/>
            <person name="Arnesen T."/>
            <person name="Sherman F."/>
            <person name="Gevaert K."/>
            <person name="Aldabe R."/>
        </authorList>
    </citation>
    <scope>ACETYLATION [LARGE SCALE ANALYSIS] AT SER-2</scope>
    <scope>CLEAVAGE OF INITIATOR METHIONINE [LARGE SCALE ANALYSIS]</scope>
    <scope>IDENTIFICATION BY MASS SPECTROMETRY [LARGE SCALE ANALYSIS]</scope>
</reference>
<reference key="12">
    <citation type="journal article" date="2014" name="FEBS Lett.">
        <title>Arginine methylation of the cellular nucleic acid binding protein does not affect its subcellular localization but impedes RNA binding.</title>
        <authorList>
            <person name="Wei H.M."/>
            <person name="Hu H.H."/>
            <person name="Chang G.Y."/>
            <person name="Lee Y.J."/>
            <person name="Li Y.C."/>
            <person name="Chang H.H."/>
            <person name="Li C."/>
        </authorList>
    </citation>
    <scope>METHYLATION AT ARG-25 AND ARG-27</scope>
    <scope>MUTAGENESIS OF ARG-25 AND ARG-27</scope>
</reference>
<reference key="13">
    <citation type="journal article" date="2014" name="J. Proteomics">
        <title>An enzyme assisted RP-RPLC approach for in-depth analysis of human liver phosphoproteome.</title>
        <authorList>
            <person name="Bian Y."/>
            <person name="Song C."/>
            <person name="Cheng K."/>
            <person name="Dong M."/>
            <person name="Wang F."/>
            <person name="Huang J."/>
            <person name="Sun D."/>
            <person name="Wang L."/>
            <person name="Ye M."/>
            <person name="Zou H."/>
        </authorList>
    </citation>
    <scope>IDENTIFICATION BY MASS SPECTROMETRY [LARGE SCALE ANALYSIS]</scope>
    <source>
        <tissue>Liver</tissue>
    </source>
</reference>
<reference key="14">
    <citation type="journal article" date="2014" name="Mol. Cell. Proteomics">
        <title>Immunoaffinity enrichment and mass spectrometry analysis of protein methylation.</title>
        <authorList>
            <person name="Guo A."/>
            <person name="Gu H."/>
            <person name="Zhou J."/>
            <person name="Mulhern D."/>
            <person name="Wang Y."/>
            <person name="Lee K.A."/>
            <person name="Yang V."/>
            <person name="Aguiar M."/>
            <person name="Kornhauser J."/>
            <person name="Jia X."/>
            <person name="Ren J."/>
            <person name="Beausoleil S.A."/>
            <person name="Silva J.C."/>
            <person name="Vemulapalli V."/>
            <person name="Bedford M.T."/>
            <person name="Comb M.J."/>
        </authorList>
    </citation>
    <scope>METHYLATION [LARGE SCALE ANALYSIS] AT ARG-79</scope>
    <scope>METHYLATION [LARGE SCALE ANALYSIS] AT ARG-32 AND ARG-34 (ISOFORMS 2; 5 AND 8)</scope>
    <scope>METHYLATION [LARGE SCALE ANALYSIS] AT ARG-80 (ISOFORM 4)</scope>
    <scope>METHYLATION [LARGE SCALE ANALYSIS] AT ARG-73 (ISOFORM 8)</scope>
    <scope>IDENTIFICATION BY MASS SPECTROMETRY [LARGE SCALE ANALYSIS]</scope>
    <source>
        <tissue>Colon carcinoma</tissue>
    </source>
</reference>
<reference key="15">
    <citation type="journal article" date="2015" name="Proteomics">
        <title>N-terminome analysis of the human mitochondrial proteome.</title>
        <authorList>
            <person name="Vaca Jacome A.S."/>
            <person name="Rabilloud T."/>
            <person name="Schaeffer-Reiss C."/>
            <person name="Rompais M."/>
            <person name="Ayoub D."/>
            <person name="Lane L."/>
            <person name="Bairoch A."/>
            <person name="Van Dorsselaer A."/>
            <person name="Carapito C."/>
        </authorList>
    </citation>
    <scope>IDENTIFICATION BY MASS SPECTROMETRY [LARGE SCALE ANALYSIS]</scope>
</reference>
<reference key="16">
    <citation type="journal article" date="2017" name="Cell Rep.">
        <title>The Human CCHC-type Zinc Finger Nucleic Acid-Binding Protein Binds G-Rich Elements in Target mRNA Coding Sequences and Promotes Translation.</title>
        <authorList>
            <person name="Benhalevy D."/>
            <person name="Gupta S.K."/>
            <person name="Danan C.H."/>
            <person name="Ghosal S."/>
            <person name="Sun H.W."/>
            <person name="Kazemier H.G."/>
            <person name="Paeschke K."/>
            <person name="Hafner M."/>
            <person name="Juranek S.A."/>
        </authorList>
    </citation>
    <scope>FUNCTION (ISOFORMS 1; 2; 4; 5; 6 AND 8)</scope>
    <scope>ASSOCIATION WITH RIBOSOMES AND POLYSOMES</scope>
    <scope>SUBCELLULAR LOCATION (ISOFORMS 1; 2; 4; 5; 6 AND 8)</scope>
</reference>
<dbReference type="EMBL" id="M28372">
    <property type="protein sequence ID" value="AAA61975.1"/>
    <property type="molecule type" value="mRNA"/>
</dbReference>
<dbReference type="EMBL" id="U19765">
    <property type="protein sequence ID" value="AAA91782.1"/>
    <property type="molecule type" value="Genomic_DNA"/>
</dbReference>
<dbReference type="EMBL" id="AY329622">
    <property type="protein sequence ID" value="AAR89462.1"/>
    <property type="molecule type" value="Genomic_DNA"/>
</dbReference>
<dbReference type="EMBL" id="DQ092366">
    <property type="protein sequence ID" value="AAY96754.1"/>
    <property type="molecule type" value="mRNA"/>
</dbReference>
<dbReference type="EMBL" id="DQ092367">
    <property type="protein sequence ID" value="AAY96755.1"/>
    <property type="molecule type" value="mRNA"/>
</dbReference>
<dbReference type="EMBL" id="DQ091187">
    <property type="protein sequence ID" value="AAY89856.1"/>
    <property type="molecule type" value="mRNA"/>
</dbReference>
<dbReference type="EMBL" id="AK054592">
    <property type="protein sequence ID" value="BAB70769.1"/>
    <property type="molecule type" value="mRNA"/>
</dbReference>
<dbReference type="EMBL" id="AK298154">
    <property type="protein sequence ID" value="BAG60429.1"/>
    <property type="molecule type" value="mRNA"/>
</dbReference>
<dbReference type="EMBL" id="AK292119">
    <property type="protein sequence ID" value="BAF84808.1"/>
    <property type="molecule type" value="mRNA"/>
</dbReference>
<dbReference type="EMBL" id="AK314380">
    <property type="protein sequence ID" value="BAG37006.1"/>
    <property type="molecule type" value="mRNA"/>
</dbReference>
<dbReference type="EMBL" id="BT019613">
    <property type="protein sequence ID" value="AAV38419.1"/>
    <property type="molecule type" value="mRNA"/>
</dbReference>
<dbReference type="EMBL" id="AC108673">
    <property type="status" value="NOT_ANNOTATED_CDS"/>
    <property type="molecule type" value="Genomic_DNA"/>
</dbReference>
<dbReference type="EMBL" id="AC135587">
    <property type="status" value="NOT_ANNOTATED_CDS"/>
    <property type="molecule type" value="Genomic_DNA"/>
</dbReference>
<dbReference type="EMBL" id="CH471052">
    <property type="protein sequence ID" value="EAW79271.1"/>
    <property type="molecule type" value="Genomic_DNA"/>
</dbReference>
<dbReference type="EMBL" id="CH471052">
    <property type="protein sequence ID" value="EAW79272.1"/>
    <property type="molecule type" value="Genomic_DNA"/>
</dbReference>
<dbReference type="EMBL" id="CH471052">
    <property type="protein sequence ID" value="EAW79273.1"/>
    <property type="molecule type" value="Genomic_DNA"/>
</dbReference>
<dbReference type="EMBL" id="CH471052">
    <property type="protein sequence ID" value="EAW79274.1"/>
    <property type="molecule type" value="Genomic_DNA"/>
</dbReference>
<dbReference type="EMBL" id="CH471052">
    <property type="protein sequence ID" value="EAW79275.1"/>
    <property type="molecule type" value="Genomic_DNA"/>
</dbReference>
<dbReference type="EMBL" id="CH471052">
    <property type="protein sequence ID" value="EAW79277.1"/>
    <property type="molecule type" value="Genomic_DNA"/>
</dbReference>
<dbReference type="EMBL" id="BC000288">
    <property type="protein sequence ID" value="AAH00288.1"/>
    <property type="molecule type" value="mRNA"/>
</dbReference>
<dbReference type="EMBL" id="BC014911">
    <property type="protein sequence ID" value="AAH14911.1"/>
    <property type="molecule type" value="mRNA"/>
</dbReference>
<dbReference type="EMBL" id="BC093058">
    <property type="protein sequence ID" value="AAH93058.1"/>
    <property type="molecule type" value="mRNA"/>
</dbReference>
<dbReference type="CCDS" id="CCDS3056.1">
    <molecule id="P62633-1"/>
</dbReference>
<dbReference type="CCDS" id="CCDS46906.1">
    <molecule id="P62633-6"/>
</dbReference>
<dbReference type="CCDS" id="CCDS46907.1">
    <molecule id="P62633-4"/>
</dbReference>
<dbReference type="CCDS" id="CCDS46908.1">
    <molecule id="P62633-5"/>
</dbReference>
<dbReference type="CCDS" id="CCDS54637.1">
    <molecule id="P62633-2"/>
</dbReference>
<dbReference type="PIR" id="A32760">
    <property type="entry name" value="A32760"/>
</dbReference>
<dbReference type="RefSeq" id="NP_001120664.1">
    <molecule id="P62633-6"/>
    <property type="nucleotide sequence ID" value="NM_001127192.2"/>
</dbReference>
<dbReference type="RefSeq" id="NP_001120665.1">
    <molecule id="P62633-4"/>
    <property type="nucleotide sequence ID" value="NM_001127193.2"/>
</dbReference>
<dbReference type="RefSeq" id="NP_001120666.1">
    <molecule id="P62633-5"/>
    <property type="nucleotide sequence ID" value="NM_001127194.2"/>
</dbReference>
<dbReference type="RefSeq" id="NP_001120667.1">
    <molecule id="P62633-8"/>
    <property type="nucleotide sequence ID" value="NM_001127195.2"/>
</dbReference>
<dbReference type="RefSeq" id="NP_001120668.1">
    <molecule id="P62633-2"/>
    <property type="nucleotide sequence ID" value="NM_001127196.2"/>
</dbReference>
<dbReference type="RefSeq" id="NP_003409.1">
    <molecule id="P62633-1"/>
    <property type="nucleotide sequence ID" value="NM_003418.5"/>
</dbReference>
<dbReference type="SASBDB" id="P62633"/>
<dbReference type="BioGRID" id="113387">
    <property type="interactions" value="295"/>
</dbReference>
<dbReference type="CORUM" id="P62633"/>
<dbReference type="FunCoup" id="P62633">
    <property type="interactions" value="2950"/>
</dbReference>
<dbReference type="IntAct" id="P62633">
    <property type="interactions" value="153"/>
</dbReference>
<dbReference type="MINT" id="P62633"/>
<dbReference type="STRING" id="9606.ENSP00000410769"/>
<dbReference type="GlyGen" id="P62633">
    <property type="glycosylation" value="1 site, 1 O-linked glycan (1 site)"/>
</dbReference>
<dbReference type="iPTMnet" id="P62633"/>
<dbReference type="PhosphoSitePlus" id="P62633"/>
<dbReference type="SwissPalm" id="P62633"/>
<dbReference type="BioMuta" id="CNBP"/>
<dbReference type="DMDM" id="50401852"/>
<dbReference type="CPTAC" id="CPTAC-480"/>
<dbReference type="CPTAC" id="CPTAC-481"/>
<dbReference type="jPOST" id="P62633"/>
<dbReference type="MassIVE" id="P62633"/>
<dbReference type="PaxDb" id="9606-ENSP00000410769"/>
<dbReference type="PeptideAtlas" id="P62633"/>
<dbReference type="ProteomicsDB" id="19732"/>
<dbReference type="ProteomicsDB" id="4742"/>
<dbReference type="ProteomicsDB" id="57408">
    <molecule id="P62633-1"/>
</dbReference>
<dbReference type="ProteomicsDB" id="57409">
    <molecule id="P62633-2"/>
</dbReference>
<dbReference type="ProteomicsDB" id="57410">
    <molecule id="P62633-3"/>
</dbReference>
<dbReference type="ProteomicsDB" id="57411">
    <molecule id="P62633-4"/>
</dbReference>
<dbReference type="ProteomicsDB" id="57412">
    <molecule id="P62633-5"/>
</dbReference>
<dbReference type="Pumba" id="P62633"/>
<dbReference type="Antibodypedia" id="33233">
    <property type="antibodies" value="328 antibodies from 31 providers"/>
</dbReference>
<dbReference type="DNASU" id="7555"/>
<dbReference type="Ensembl" id="ENST00000422453.7">
    <molecule id="P62633-1"/>
    <property type="protein sequence ID" value="ENSP00000410619.3"/>
    <property type="gene ID" value="ENSG00000169714.17"/>
</dbReference>
<dbReference type="Ensembl" id="ENST00000441626.6">
    <molecule id="P62633-6"/>
    <property type="protein sequence ID" value="ENSP00000410769.2"/>
    <property type="gene ID" value="ENSG00000169714.17"/>
</dbReference>
<dbReference type="Ensembl" id="ENST00000446936.6">
    <molecule id="P62633-5"/>
    <property type="protein sequence ID" value="ENSP00000400444.2"/>
    <property type="gene ID" value="ENSG00000169714.17"/>
</dbReference>
<dbReference type="Ensembl" id="ENST00000451728.6">
    <molecule id="P62633-4"/>
    <property type="protein sequence ID" value="ENSP00000399488.2"/>
    <property type="gene ID" value="ENSG00000169714.17"/>
</dbReference>
<dbReference type="Ensembl" id="ENST00000500450.6">
    <molecule id="P62633-7"/>
    <property type="protein sequence ID" value="ENSP00000426223.1"/>
    <property type="gene ID" value="ENSG00000169714.17"/>
</dbReference>
<dbReference type="Ensembl" id="ENST00000502976.5">
    <molecule id="P62633-2"/>
    <property type="protein sequence ID" value="ENSP00000421323.1"/>
    <property type="gene ID" value="ENSG00000169714.17"/>
</dbReference>
<dbReference type="Ensembl" id="ENST00000504813.5">
    <molecule id="P62633-3"/>
    <property type="protein sequence ID" value="ENSP00000422110.1"/>
    <property type="gene ID" value="ENSG00000169714.17"/>
</dbReference>
<dbReference type="GeneID" id="7555"/>
<dbReference type="KEGG" id="hsa:7555"/>
<dbReference type="MANE-Select" id="ENST00000422453.7">
    <property type="protein sequence ID" value="ENSP00000410619.3"/>
    <property type="RefSeq nucleotide sequence ID" value="NM_003418.5"/>
    <property type="RefSeq protein sequence ID" value="NP_003409.1"/>
</dbReference>
<dbReference type="UCSC" id="uc003elq.5">
    <molecule id="P62633-1"/>
    <property type="organism name" value="human"/>
</dbReference>
<dbReference type="AGR" id="HGNC:13164"/>
<dbReference type="CTD" id="7555"/>
<dbReference type="DisGeNET" id="7555"/>
<dbReference type="GeneCards" id="CNBP"/>
<dbReference type="GeneReviews" id="CNBP"/>
<dbReference type="HGNC" id="HGNC:13164">
    <property type="gene designation" value="CNBP"/>
</dbReference>
<dbReference type="HPA" id="ENSG00000169714">
    <property type="expression patterns" value="Low tissue specificity"/>
</dbReference>
<dbReference type="MalaCards" id="CNBP"/>
<dbReference type="MIM" id="116955">
    <property type="type" value="gene"/>
</dbReference>
<dbReference type="MIM" id="602668">
    <property type="type" value="phenotype"/>
</dbReference>
<dbReference type="neXtProt" id="NX_P62633"/>
<dbReference type="OpenTargets" id="ENSG00000169714"/>
<dbReference type="Orphanet" id="606">
    <property type="disease" value="Proximal myotonic myopathy"/>
</dbReference>
<dbReference type="PharmGKB" id="PA37737"/>
<dbReference type="VEuPathDB" id="HostDB:ENSG00000169714"/>
<dbReference type="eggNOG" id="KOG4400">
    <property type="taxonomic scope" value="Eukaryota"/>
</dbReference>
<dbReference type="GeneTree" id="ENSGT00950000183041"/>
<dbReference type="HOGENOM" id="CLU_058879_4_0_1"/>
<dbReference type="InParanoid" id="P62633"/>
<dbReference type="OMA" id="KGNPTCY"/>
<dbReference type="OrthoDB" id="427960at2759"/>
<dbReference type="PAN-GO" id="P62633">
    <property type="GO annotations" value="5 GO annotations based on evolutionary models"/>
</dbReference>
<dbReference type="PhylomeDB" id="P62633"/>
<dbReference type="TreeFam" id="TF316974"/>
<dbReference type="PathwayCommons" id="P62633"/>
<dbReference type="Reactome" id="R-HSA-9705671">
    <property type="pathway name" value="SARS-CoV-2 activates/modulates innate and adaptive immune responses"/>
</dbReference>
<dbReference type="SignaLink" id="P62633"/>
<dbReference type="SIGNOR" id="P62633"/>
<dbReference type="BioGRID-ORCS" id="7555">
    <property type="hits" value="41 hits in 1166 CRISPR screens"/>
</dbReference>
<dbReference type="CD-CODE" id="DEE660B4">
    <property type="entry name" value="Stress granule"/>
</dbReference>
<dbReference type="ChiTaRS" id="CNBP">
    <property type="organism name" value="human"/>
</dbReference>
<dbReference type="GeneWiki" id="CNBP"/>
<dbReference type="GenomeRNAi" id="7555"/>
<dbReference type="Pharos" id="P62633">
    <property type="development level" value="Tbio"/>
</dbReference>
<dbReference type="PRO" id="PR:P62633"/>
<dbReference type="Proteomes" id="UP000005640">
    <property type="component" value="Chromosome 3"/>
</dbReference>
<dbReference type="RNAct" id="P62633">
    <property type="molecule type" value="protein"/>
</dbReference>
<dbReference type="Bgee" id="ENSG00000169714">
    <property type="expression patterns" value="Expressed in skeletal muscle tissue of rectus abdominis and 207 other cell types or tissues"/>
</dbReference>
<dbReference type="ExpressionAtlas" id="P62633">
    <property type="expression patterns" value="baseline and differential"/>
</dbReference>
<dbReference type="GO" id="GO:0005737">
    <property type="term" value="C:cytoplasm"/>
    <property type="evidence" value="ECO:0000318"/>
    <property type="project" value="GO_Central"/>
</dbReference>
<dbReference type="GO" id="GO:0005829">
    <property type="term" value="C:cytosol"/>
    <property type="evidence" value="ECO:0000250"/>
    <property type="project" value="UniProtKB"/>
</dbReference>
<dbReference type="GO" id="GO:0005783">
    <property type="term" value="C:endoplasmic reticulum"/>
    <property type="evidence" value="ECO:0000250"/>
    <property type="project" value="UniProtKB"/>
</dbReference>
<dbReference type="GO" id="GO:0051880">
    <property type="term" value="F:G-quadruplex DNA binding"/>
    <property type="evidence" value="ECO:0000314"/>
    <property type="project" value="ARUK-UCL"/>
</dbReference>
<dbReference type="GO" id="GO:0003729">
    <property type="term" value="F:mRNA binding"/>
    <property type="evidence" value="ECO:0000318"/>
    <property type="project" value="GO_Central"/>
</dbReference>
<dbReference type="GO" id="GO:0003723">
    <property type="term" value="F:RNA binding"/>
    <property type="evidence" value="ECO:0007005"/>
    <property type="project" value="UniProtKB"/>
</dbReference>
<dbReference type="GO" id="GO:0003727">
    <property type="term" value="F:single-stranded RNA binding"/>
    <property type="evidence" value="ECO:0000318"/>
    <property type="project" value="GO_Central"/>
</dbReference>
<dbReference type="GO" id="GO:0045182">
    <property type="term" value="F:translation regulator activity"/>
    <property type="evidence" value="ECO:0000318"/>
    <property type="project" value="GO_Central"/>
</dbReference>
<dbReference type="GO" id="GO:0008270">
    <property type="term" value="F:zinc ion binding"/>
    <property type="evidence" value="ECO:0007669"/>
    <property type="project" value="UniProtKB-KW"/>
</dbReference>
<dbReference type="GO" id="GO:0042632">
    <property type="term" value="P:cholesterol homeostasis"/>
    <property type="evidence" value="ECO:0000304"/>
    <property type="project" value="GO_Central"/>
</dbReference>
<dbReference type="GO" id="GO:0071919">
    <property type="term" value="P:G-quadruplex DNA formation"/>
    <property type="evidence" value="ECO:0000314"/>
    <property type="project" value="ARUK-UCL"/>
</dbReference>
<dbReference type="GO" id="GO:0000122">
    <property type="term" value="P:negative regulation of transcription by RNA polymerase II"/>
    <property type="evidence" value="ECO:0000314"/>
    <property type="project" value="NTNU_SB"/>
</dbReference>
<dbReference type="GO" id="GO:0008284">
    <property type="term" value="P:positive regulation of cell population proliferation"/>
    <property type="evidence" value="ECO:0000250"/>
    <property type="project" value="UniProtKB"/>
</dbReference>
<dbReference type="GO" id="GO:2000767">
    <property type="term" value="P:positive regulation of cytoplasmic translation"/>
    <property type="evidence" value="ECO:0000318"/>
    <property type="project" value="GO_Central"/>
</dbReference>
<dbReference type="GO" id="GO:0045893">
    <property type="term" value="P:positive regulation of DNA-templated transcription"/>
    <property type="evidence" value="ECO:0000250"/>
    <property type="project" value="UniProtKB"/>
</dbReference>
<dbReference type="GO" id="GO:0045944">
    <property type="term" value="P:positive regulation of transcription by RNA polymerase II"/>
    <property type="evidence" value="ECO:0000250"/>
    <property type="project" value="UniProtKB"/>
</dbReference>
<dbReference type="GO" id="GO:0006355">
    <property type="term" value="P:regulation of DNA-templated transcription"/>
    <property type="evidence" value="ECO:0000304"/>
    <property type="project" value="ProtInc"/>
</dbReference>
<dbReference type="FunFam" id="4.10.60.10:FF:000002">
    <property type="entry name" value="cellular nucleic acid-binding protein-like isoform X1"/>
    <property type="match status" value="2"/>
</dbReference>
<dbReference type="FunFam" id="4.10.60.10:FF:000006">
    <property type="entry name" value="cellular nucleic acid-binding protein-like isoform X1"/>
    <property type="match status" value="1"/>
</dbReference>
<dbReference type="FunFam" id="4.10.60.10:FF:000026">
    <property type="entry name" value="cellular nucleic acid-binding protein-like isoform X1"/>
    <property type="match status" value="1"/>
</dbReference>
<dbReference type="Gene3D" id="4.10.60.10">
    <property type="entry name" value="Zinc finger, CCHC-type"/>
    <property type="match status" value="5"/>
</dbReference>
<dbReference type="InterPro" id="IPR001878">
    <property type="entry name" value="Znf_CCHC"/>
</dbReference>
<dbReference type="InterPro" id="IPR036875">
    <property type="entry name" value="Znf_CCHC_sf"/>
</dbReference>
<dbReference type="PANTHER" id="PTHR47103">
    <property type="entry name" value="DNA-BINDING PROTEIN"/>
    <property type="match status" value="1"/>
</dbReference>
<dbReference type="PANTHER" id="PTHR47103:SF8">
    <property type="entry name" value="DNA-BINDING PROTEIN"/>
    <property type="match status" value="1"/>
</dbReference>
<dbReference type="Pfam" id="PF00098">
    <property type="entry name" value="zf-CCHC"/>
    <property type="match status" value="7"/>
</dbReference>
<dbReference type="SMART" id="SM00343">
    <property type="entry name" value="ZnF_C2HC"/>
    <property type="match status" value="7"/>
</dbReference>
<dbReference type="SUPFAM" id="SSF57756">
    <property type="entry name" value="Retrovirus zinc finger-like domains"/>
    <property type="match status" value="4"/>
</dbReference>
<dbReference type="PROSITE" id="PS50158">
    <property type="entry name" value="ZF_CCHC"/>
    <property type="match status" value="7"/>
</dbReference>
<gene>
    <name evidence="12" type="primary">CNBP</name>
    <name type="synonym">RNF163</name>
    <name type="synonym">ZNF9</name>
</gene>
<keyword id="KW-0007">Acetylation</keyword>
<keyword id="KW-0025">Alternative splicing</keyword>
<keyword id="KW-0963">Cytoplasm</keyword>
<keyword id="KW-0238">DNA-binding</keyword>
<keyword id="KW-0256">Endoplasmic reticulum</keyword>
<keyword id="KW-0479">Metal-binding</keyword>
<keyword id="KW-0488">Methylation</keyword>
<keyword id="KW-0539">Nucleus</keyword>
<keyword id="KW-0597">Phosphoprotein</keyword>
<keyword id="KW-1267">Proteomics identification</keyword>
<keyword id="KW-1185">Reference proteome</keyword>
<keyword id="KW-0677">Repeat</keyword>
<keyword id="KW-0678">Repressor</keyword>
<keyword id="KW-0804">Transcription</keyword>
<keyword id="KW-0805">Transcription regulation</keyword>
<keyword id="KW-0862">Zinc</keyword>
<keyword id="KW-0863">Zinc-finger</keyword>
<name>CNBP_HUMAN</name>
<organism>
    <name type="scientific">Homo sapiens</name>
    <name type="common">Human</name>
    <dbReference type="NCBI Taxonomy" id="9606"/>
    <lineage>
        <taxon>Eukaryota</taxon>
        <taxon>Metazoa</taxon>
        <taxon>Chordata</taxon>
        <taxon>Craniata</taxon>
        <taxon>Vertebrata</taxon>
        <taxon>Euteleostomi</taxon>
        <taxon>Mammalia</taxon>
        <taxon>Eutheria</taxon>
        <taxon>Euarchontoglires</taxon>
        <taxon>Primates</taxon>
        <taxon>Haplorrhini</taxon>
        <taxon>Catarrhini</taxon>
        <taxon>Hominidae</taxon>
        <taxon>Homo</taxon>
    </lineage>
</organism>
<accession>P62633</accession>
<accession>A8K7V4</accession>
<accession>B2RAV9</accession>
<accession>B4DP17</accession>
<accession>D3DNB9</accession>
<accession>D3DNC0</accession>
<accession>D3DNC1</accession>
<accession>E9PDR7</accession>
<accession>P20694</accession>
<accession>Q4JGY0</accession>
<accession>Q4JGY1</accession>
<accession>Q5QJR0</accession>
<accession>Q5U0E9</accession>
<accession>Q6PJI7</accession>
<accession>Q96NV3</accession>
<protein>
    <recommendedName>
        <fullName evidence="12">CCHC-type zinc finger nucleic acid binding protein</fullName>
    </recommendedName>
    <alternativeName>
        <fullName evidence="11">Cellular nucleic acid-binding protein</fullName>
        <shortName evidence="11">CNBP</shortName>
    </alternativeName>
    <alternativeName>
        <fullName>Zinc finger protein 9</fullName>
    </alternativeName>
</protein>
<sequence>MSSNECFKCGRSGHWARECPTGGGRGRGMRSRGRGGFTSDRGFQFVSSSLPDICYRCGESGHLAKDCDLQEDACYNCGRGGHIAKDCKEPKREREQCCYNCGKPGHLARDCDHADEQKCYSCGEFGHIQKDCTKVKCYRCGETGHVAINCSKTSEVNCYRCGESGHLARECTIEATA</sequence>
<comment type="function">
    <text evidence="1 2 5">Single-stranded DNA-binding protein that preferentially binds to the sterol regulatory element (SRE) sequence 5'-GTGCGGTG-3', and thereby mediates transcriptional repression (PubMed:2562787). Has a role as transactivator of the Myc promoter (By similarity). Binds single-stranded RNA in a sequence-specific manner (By similarity).</text>
</comment>
<comment type="function">
    <molecule>Isoform 1</molecule>
    <text evidence="6">Binds G-rich elements in target mRNA coding sequences (PubMed:28329689). Prevents G-quadruplex structure formation in vitro, suggesting a role in supporting translation by resolving stable structures on mRNAs (PubMed:28329689).</text>
</comment>
<comment type="function">
    <molecule>Isoform 2</molecule>
    <text evidence="6">Binds to RNA.</text>
</comment>
<comment type="function">
    <molecule>Isoform 4</molecule>
    <text evidence="6">Binds to RNA.</text>
</comment>
<comment type="function">
    <molecule>Isoform 5</molecule>
    <text evidence="6">Binds to RNA.</text>
</comment>
<comment type="function">
    <molecule>Isoform 6</molecule>
    <text evidence="6">Binds to RNA.</text>
</comment>
<comment type="function">
    <molecule>Isoform 8</molecule>
    <text evidence="6">Binds to RNA.</text>
</comment>
<comment type="subunit">
    <text evidence="6">Associates with the 40S ribosomal subunit, the 80S ribosome and with polysomes.</text>
</comment>
<comment type="interaction">
    <interactant intactId="EBI-1047529">
        <id>P62633</id>
    </interactant>
    <interactant intactId="EBI-78708">
        <id>Q63009</id>
        <label>Prmt1</label>
    </interactant>
    <organismsDiffer>true</organismsDiffer>
    <experiments>2</experiments>
</comment>
<comment type="subcellular location">
    <subcellularLocation>
        <location evidence="1">Nucleus</location>
    </subcellularLocation>
    <subcellularLocation>
        <location evidence="6">Cytoplasm</location>
    </subcellularLocation>
    <subcellularLocation>
        <location evidence="1">Endoplasmic reticulum</location>
    </subcellularLocation>
</comment>
<comment type="subcellular location">
    <molecule>Isoform 1</molecule>
    <subcellularLocation>
        <location evidence="6">Cytoplasm</location>
    </subcellularLocation>
</comment>
<comment type="subcellular location">
    <molecule>Isoform 2</molecule>
    <subcellularLocation>
        <location evidence="6">Cytoplasm</location>
    </subcellularLocation>
</comment>
<comment type="subcellular location">
    <molecule>Isoform 4</molecule>
    <subcellularLocation>
        <location evidence="6">Cytoplasm</location>
    </subcellularLocation>
</comment>
<comment type="subcellular location">
    <molecule>Isoform 5</molecule>
    <subcellularLocation>
        <location evidence="6">Cytoplasm</location>
    </subcellularLocation>
</comment>
<comment type="subcellular location">
    <molecule>Isoform 6</molecule>
    <subcellularLocation>
        <location evidence="6">Cytoplasm</location>
    </subcellularLocation>
</comment>
<comment type="subcellular location">
    <molecule>Isoform 8</molecule>
    <subcellularLocation>
        <location evidence="6">Cytoplasm</location>
    </subcellularLocation>
</comment>
<comment type="alternative products">
    <event type="alternative splicing"/>
    <isoform>
        <id>P62633-1</id>
        <name>1</name>
        <sequence type="displayed"/>
    </isoform>
    <isoform>
        <id>P62633-2</id>
        <name>2</name>
        <sequence type="described" ref="VSP_010981"/>
    </isoform>
    <isoform>
        <id>P62633-3</id>
        <name>3</name>
        <sequence type="described" ref="VSP_010982"/>
    </isoform>
    <isoform>
        <id>P62633-4</id>
        <name>4</name>
        <sequence type="described" ref="VSP_043304"/>
    </isoform>
    <isoform>
        <id>P62633-5</id>
        <name>5</name>
        <sequence type="described" ref="VSP_010981 VSP_043424"/>
    </isoform>
    <isoform>
        <id>P62633-6</id>
        <name>6</name>
        <sequence type="described" ref="VSP_043424"/>
    </isoform>
    <isoform>
        <id>P62633-7</id>
        <name>7</name>
        <sequence type="described" ref="VSP_055084"/>
    </isoform>
    <isoform>
        <id>P62633-8</id>
        <name>8</name>
        <sequence type="described" ref="VSP_010981 VSP_043304"/>
    </isoform>
</comment>
<comment type="tissue specificity">
    <text evidence="5">Expressed in the liver, kidney, spleen, testis, lung, muscle and adrenal glands.</text>
</comment>
<comment type="induction">
    <text evidence="5">Transcriptionally up-regulated by sterol treatment.</text>
</comment>
<comment type="PTM">
    <text evidence="4">Arginine methylation by PRMT1 in the Arg/Gly-rich region impedes RNA binding.</text>
</comment>
<comment type="disease">
    <disease id="DI-02024">
        <name>Dystrophia myotonica 2</name>
        <acronym>DM2</acronym>
        <description>A multisystem disease characterized by the association of proximal muscle weakness with myotonia, cardiac manifestations and cataract. Additional features can include hyperhidrosis, testicular atrophy, insulin resistance and diabetes and central nervous system anomalies in rare cases.</description>
        <dbReference type="MIM" id="602668"/>
    </disease>
    <text>The disease is caused by variants affecting the gene represented in this entry. The causative mutation is a CCTG expansion (mean approximately 5000 repeats) located in intron 1 of the CNBP gene.</text>
</comment>
<feature type="initiator methionine" description="Removed" evidence="13">
    <location>
        <position position="1"/>
    </location>
</feature>
<feature type="chain" id="PRO_0000089965" description="CCHC-type zinc finger nucleic acid binding protein">
    <location>
        <begin position="2"/>
        <end position="177"/>
    </location>
</feature>
<feature type="zinc finger region" description="CCHC-type 1" evidence="3">
    <location>
        <begin position="4"/>
        <end position="21"/>
    </location>
</feature>
<feature type="zinc finger region" description="CCHC-type 2" evidence="3">
    <location>
        <begin position="52"/>
        <end position="69"/>
    </location>
</feature>
<feature type="zinc finger region" description="CCHC-type 3" evidence="3">
    <location>
        <begin position="72"/>
        <end position="89"/>
    </location>
</feature>
<feature type="zinc finger region" description="CCHC-type 4" evidence="3">
    <location>
        <begin position="96"/>
        <end position="113"/>
    </location>
</feature>
<feature type="zinc finger region" description="CCHC-type 5" evidence="3">
    <location>
        <begin position="117"/>
        <end position="134"/>
    </location>
</feature>
<feature type="zinc finger region" description="CCHC-type 6" evidence="3">
    <location>
        <begin position="135"/>
        <end position="152"/>
    </location>
</feature>
<feature type="zinc finger region" description="CCHC-type 7" evidence="3">
    <location>
        <begin position="156"/>
        <end position="173"/>
    </location>
</feature>
<feature type="region of interest" description="RNA-binding Arg/Gly-rich region (RGG-box)" evidence="6">
    <location>
        <begin position="25"/>
        <end position="38"/>
    </location>
</feature>
<feature type="modified residue" description="N-acetylserine" evidence="13">
    <location>
        <position position="2"/>
    </location>
</feature>
<feature type="modified residue" description="N6-acetyllysine" evidence="1">
    <location>
        <position position="8"/>
    </location>
</feature>
<feature type="modified residue" description="Omega-N-methylarginine; by PRMT1" evidence="4">
    <location>
        <position position="25"/>
    </location>
</feature>
<feature type="modified residue" description="Omega-N-methylarginine; by PRMT1" evidence="4">
    <location>
        <position position="27"/>
    </location>
</feature>
<feature type="modified residue" description="Phosphoserine" evidence="1">
    <location>
        <position position="49"/>
    </location>
</feature>
<feature type="modified residue" description="Omega-N-methylarginine" evidence="14">
    <location>
        <position position="79"/>
    </location>
</feature>
<feature type="splice variant" id="VSP_055084" description="In isoform 7." evidence="7">
    <location>
        <begin position="35"/>
        <end position="51"/>
    </location>
</feature>
<feature type="splice variant" id="VSP_010981" description="In isoform 2, isoform 5 and isoform 8." evidence="8 9">
    <location>
        <begin position="36"/>
        <end position="42"/>
    </location>
</feature>
<feature type="splice variant" id="VSP_010982" description="In isoform 3." evidence="7">
    <location>
        <begin position="42"/>
        <end position="51"/>
    </location>
</feature>
<feature type="splice variant" id="VSP_043304" description="In isoform 4 and isoform 8." evidence="9 10">
    <original>D</original>
    <variation>DE</variation>
    <location>
        <position position="72"/>
    </location>
</feature>
<feature type="splice variant" id="VSP_043424" description="In isoform 5 and isoform 6." evidence="7 9">
    <original>D</original>
    <variation>DVE</variation>
    <location>
        <position position="72"/>
    </location>
</feature>
<feature type="mutagenesis site" description="Significantly reduces methylation; when associated with K-27." evidence="4">
    <original>R</original>
    <variation>K</variation>
    <location>
        <position position="25"/>
    </location>
</feature>
<feature type="mutagenesis site" description="Significantly reduces methylation; when associated with K-25." evidence="4">
    <original>R</original>
    <variation>K</variation>
    <location>
        <position position="27"/>
    </location>
</feature>
<feature type="sequence conflict" description="In Ref. 5; BAF84808." evidence="11" ref="5">
    <original>C</original>
    <variation>R</variation>
    <location>
        <position position="6"/>
    </location>
</feature>
<feature type="modified residue" description="Omega-N-methylarginine" evidence="14">
    <location sequence="P62633-2">
        <position position="32"/>
    </location>
</feature>
<feature type="modified residue" description="Omega-N-methylarginine" evidence="14">
    <location sequence="P62633-2">
        <position position="34"/>
    </location>
</feature>
<feature type="modified residue" description="Omega-N-methylarginine" evidence="14">
    <location sequence="P62633-4">
        <position position="80"/>
    </location>
</feature>
<feature type="modified residue" description="Omega-N-methylarginine" evidence="14">
    <location sequence="P62633-5">
        <position position="32"/>
    </location>
</feature>
<feature type="modified residue" description="Omega-N-methylarginine" evidence="14">
    <location sequence="P62633-5">
        <position position="34"/>
    </location>
</feature>
<feature type="modified residue" description="Omega-N-methylarginine" evidence="14">
    <location sequence="P62633-8">
        <position position="32"/>
    </location>
</feature>
<feature type="modified residue" description="Omega-N-methylarginine" evidence="14">
    <location sequence="P62633-8">
        <position position="34"/>
    </location>
</feature>
<feature type="modified residue" description="Omega-N-methylarginine" evidence="14">
    <location sequence="P62633-8">
        <position position="73"/>
    </location>
</feature>
<proteinExistence type="evidence at protein level"/>
<evidence type="ECO:0000250" key="1">
    <source>
        <dbReference type="UniProtKB" id="P53996"/>
    </source>
</evidence>
<evidence type="ECO:0000250" key="2">
    <source>
        <dbReference type="UniProtKB" id="P62634"/>
    </source>
</evidence>
<evidence type="ECO:0000255" key="3">
    <source>
        <dbReference type="PROSITE-ProRule" id="PRU00047"/>
    </source>
</evidence>
<evidence type="ECO:0000269" key="4">
    <source>
    </source>
</evidence>
<evidence type="ECO:0000269" key="5">
    <source>
    </source>
</evidence>
<evidence type="ECO:0000269" key="6">
    <source>
    </source>
</evidence>
<evidence type="ECO:0000303" key="7">
    <source>
    </source>
</evidence>
<evidence type="ECO:0000303" key="8">
    <source>
    </source>
</evidence>
<evidence type="ECO:0000303" key="9">
    <source ref="4"/>
</evidence>
<evidence type="ECO:0000303" key="10">
    <source ref="6"/>
</evidence>
<evidence type="ECO:0000305" key="11"/>
<evidence type="ECO:0000312" key="12">
    <source>
        <dbReference type="HGNC" id="HGNC:13164"/>
    </source>
</evidence>
<evidence type="ECO:0007744" key="13">
    <source>
    </source>
</evidence>
<evidence type="ECO:0007744" key="14">
    <source>
    </source>
</evidence>